<comment type="function">
    <text evidence="1">Catalyzes the transfer of a dimethylallyl group onto the adenine at position 37 in tRNAs that read codons beginning with uridine, leading to the formation of N6-(dimethylallyl)adenosine (i(6)A).</text>
</comment>
<comment type="catalytic activity">
    <reaction evidence="1">
        <text>adenosine(37) in tRNA + dimethylallyl diphosphate = N(6)-dimethylallyladenosine(37) in tRNA + diphosphate</text>
        <dbReference type="Rhea" id="RHEA:26482"/>
        <dbReference type="Rhea" id="RHEA-COMP:10162"/>
        <dbReference type="Rhea" id="RHEA-COMP:10375"/>
        <dbReference type="ChEBI" id="CHEBI:33019"/>
        <dbReference type="ChEBI" id="CHEBI:57623"/>
        <dbReference type="ChEBI" id="CHEBI:74411"/>
        <dbReference type="ChEBI" id="CHEBI:74415"/>
        <dbReference type="EC" id="2.5.1.75"/>
    </reaction>
</comment>
<comment type="cofactor">
    <cofactor evidence="1">
        <name>Mg(2+)</name>
        <dbReference type="ChEBI" id="CHEBI:18420"/>
    </cofactor>
</comment>
<comment type="subunit">
    <text evidence="1">Monomer.</text>
</comment>
<comment type="similarity">
    <text evidence="1">Belongs to the IPP transferase family.</text>
</comment>
<organism>
    <name type="scientific">Brucella suis biovar 1 (strain 1330)</name>
    <dbReference type="NCBI Taxonomy" id="204722"/>
    <lineage>
        <taxon>Bacteria</taxon>
        <taxon>Pseudomonadati</taxon>
        <taxon>Pseudomonadota</taxon>
        <taxon>Alphaproteobacteria</taxon>
        <taxon>Hyphomicrobiales</taxon>
        <taxon>Brucellaceae</taxon>
        <taxon>Brucella/Ochrobactrum group</taxon>
        <taxon>Brucella</taxon>
    </lineage>
</organism>
<evidence type="ECO:0000255" key="1">
    <source>
        <dbReference type="HAMAP-Rule" id="MF_00185"/>
    </source>
</evidence>
<feature type="chain" id="PRO_0000163889" description="tRNA dimethylallyltransferase">
    <location>
        <begin position="1"/>
        <end position="310"/>
    </location>
</feature>
<feature type="region of interest" description="Interaction with substrate tRNA" evidence="1">
    <location>
        <begin position="39"/>
        <end position="42"/>
    </location>
</feature>
<feature type="region of interest" description="Interaction with substrate tRNA" evidence="1">
    <location>
        <begin position="163"/>
        <end position="167"/>
    </location>
</feature>
<feature type="binding site" evidence="1">
    <location>
        <begin position="14"/>
        <end position="21"/>
    </location>
    <ligand>
        <name>ATP</name>
        <dbReference type="ChEBI" id="CHEBI:30616"/>
    </ligand>
</feature>
<feature type="binding site" evidence="1">
    <location>
        <begin position="16"/>
        <end position="21"/>
    </location>
    <ligand>
        <name>substrate</name>
    </ligand>
</feature>
<feature type="site" description="Interaction with substrate tRNA" evidence="1">
    <location>
        <position position="105"/>
    </location>
</feature>
<feature type="site" description="Interaction with substrate tRNA" evidence="1">
    <location>
        <position position="127"/>
    </location>
</feature>
<protein>
    <recommendedName>
        <fullName evidence="1">tRNA dimethylallyltransferase</fullName>
        <ecNumber evidence="1">2.5.1.75</ecNumber>
    </recommendedName>
    <alternativeName>
        <fullName evidence="1">Dimethylallyl diphosphate:tRNA dimethylallyltransferase</fullName>
        <shortName evidence="1">DMAPP:tRNA dimethylallyltransferase</shortName>
        <shortName evidence="1">DMATase</shortName>
    </alternativeName>
    <alternativeName>
        <fullName evidence="1">Isopentenyl-diphosphate:tRNA isopentenyltransferase</fullName>
        <shortName evidence="1">IPP transferase</shortName>
        <shortName evidence="1">IPPT</shortName>
        <shortName evidence="1">IPTase</shortName>
    </alternativeName>
</protein>
<keyword id="KW-0067">ATP-binding</keyword>
<keyword id="KW-0460">Magnesium</keyword>
<keyword id="KW-0547">Nucleotide-binding</keyword>
<keyword id="KW-0808">Transferase</keyword>
<keyword id="KW-0819">tRNA processing</keyword>
<name>MIAA_BRUSU</name>
<gene>
    <name evidence="1" type="primary">miaA</name>
    <name type="ordered locus">BR1390</name>
    <name type="ordered locus">BS1330_I1384</name>
</gene>
<accession>Q8CY40</accession>
<accession>G0KB73</accession>
<proteinExistence type="inferred from homology"/>
<dbReference type="EC" id="2.5.1.75" evidence="1"/>
<dbReference type="EMBL" id="AE014291">
    <property type="protein sequence ID" value="AAN30303.1"/>
    <property type="molecule type" value="Genomic_DNA"/>
</dbReference>
<dbReference type="EMBL" id="CP002997">
    <property type="protein sequence ID" value="AEM18719.1"/>
    <property type="molecule type" value="Genomic_DNA"/>
</dbReference>
<dbReference type="RefSeq" id="WP_006190580.1">
    <property type="nucleotide sequence ID" value="NZ_KN046804.1"/>
</dbReference>
<dbReference type="SMR" id="Q8CY40"/>
<dbReference type="GeneID" id="45052406"/>
<dbReference type="KEGG" id="bms:BR1390"/>
<dbReference type="KEGG" id="bsi:BS1330_I1384"/>
<dbReference type="PATRIC" id="fig|204722.21.peg.869"/>
<dbReference type="HOGENOM" id="CLU_032616_0_1_5"/>
<dbReference type="PhylomeDB" id="Q8CY40"/>
<dbReference type="PRO" id="PR:Q8CY40"/>
<dbReference type="Proteomes" id="UP000007104">
    <property type="component" value="Chromosome I"/>
</dbReference>
<dbReference type="GO" id="GO:0005524">
    <property type="term" value="F:ATP binding"/>
    <property type="evidence" value="ECO:0007669"/>
    <property type="project" value="UniProtKB-UniRule"/>
</dbReference>
<dbReference type="GO" id="GO:0052381">
    <property type="term" value="F:tRNA dimethylallyltransferase activity"/>
    <property type="evidence" value="ECO:0007669"/>
    <property type="project" value="UniProtKB-UniRule"/>
</dbReference>
<dbReference type="GO" id="GO:0006400">
    <property type="term" value="P:tRNA modification"/>
    <property type="evidence" value="ECO:0007669"/>
    <property type="project" value="TreeGrafter"/>
</dbReference>
<dbReference type="Gene3D" id="1.10.20.140">
    <property type="match status" value="1"/>
</dbReference>
<dbReference type="Gene3D" id="3.40.50.300">
    <property type="entry name" value="P-loop containing nucleotide triphosphate hydrolases"/>
    <property type="match status" value="1"/>
</dbReference>
<dbReference type="HAMAP" id="MF_00185">
    <property type="entry name" value="IPP_trans"/>
    <property type="match status" value="1"/>
</dbReference>
<dbReference type="InterPro" id="IPR039657">
    <property type="entry name" value="Dimethylallyltransferase"/>
</dbReference>
<dbReference type="InterPro" id="IPR018022">
    <property type="entry name" value="IPT"/>
</dbReference>
<dbReference type="InterPro" id="IPR027417">
    <property type="entry name" value="P-loop_NTPase"/>
</dbReference>
<dbReference type="NCBIfam" id="TIGR00174">
    <property type="entry name" value="miaA"/>
    <property type="match status" value="1"/>
</dbReference>
<dbReference type="PANTHER" id="PTHR11088">
    <property type="entry name" value="TRNA DIMETHYLALLYLTRANSFERASE"/>
    <property type="match status" value="1"/>
</dbReference>
<dbReference type="PANTHER" id="PTHR11088:SF60">
    <property type="entry name" value="TRNA DIMETHYLALLYLTRANSFERASE"/>
    <property type="match status" value="1"/>
</dbReference>
<dbReference type="Pfam" id="PF01715">
    <property type="entry name" value="IPPT"/>
    <property type="match status" value="1"/>
</dbReference>
<dbReference type="SUPFAM" id="SSF52540">
    <property type="entry name" value="P-loop containing nucleoside triphosphate hydrolases"/>
    <property type="match status" value="2"/>
</dbReference>
<reference key="1">
    <citation type="journal article" date="2002" name="Proc. Natl. Acad. Sci. U.S.A.">
        <title>The Brucella suis genome reveals fundamental similarities between animal and plant pathogens and symbionts.</title>
        <authorList>
            <person name="Paulsen I.T."/>
            <person name="Seshadri R."/>
            <person name="Nelson K.E."/>
            <person name="Eisen J.A."/>
            <person name="Heidelberg J.F."/>
            <person name="Read T.D."/>
            <person name="Dodson R.J."/>
            <person name="Umayam L.A."/>
            <person name="Brinkac L.M."/>
            <person name="Beanan M.J."/>
            <person name="Daugherty S.C."/>
            <person name="DeBoy R.T."/>
            <person name="Durkin A.S."/>
            <person name="Kolonay J.F."/>
            <person name="Madupu R."/>
            <person name="Nelson W.C."/>
            <person name="Ayodeji B."/>
            <person name="Kraul M."/>
            <person name="Shetty J."/>
            <person name="Malek J.A."/>
            <person name="Van Aken S.E."/>
            <person name="Riedmuller S."/>
            <person name="Tettelin H."/>
            <person name="Gill S.R."/>
            <person name="White O."/>
            <person name="Salzberg S.L."/>
            <person name="Hoover D.L."/>
            <person name="Lindler L.E."/>
            <person name="Halling S.M."/>
            <person name="Boyle S.M."/>
            <person name="Fraser C.M."/>
        </authorList>
    </citation>
    <scope>NUCLEOTIDE SEQUENCE [LARGE SCALE GENOMIC DNA]</scope>
    <source>
        <strain>1330</strain>
    </source>
</reference>
<reference key="2">
    <citation type="journal article" date="2011" name="J. Bacteriol.">
        <title>Revised genome sequence of Brucella suis 1330.</title>
        <authorList>
            <person name="Tae H."/>
            <person name="Shallom S."/>
            <person name="Settlage R."/>
            <person name="Preston D."/>
            <person name="Adams L.G."/>
            <person name="Garner H.R."/>
        </authorList>
    </citation>
    <scope>NUCLEOTIDE SEQUENCE [LARGE SCALE GENOMIC DNA]</scope>
    <source>
        <strain>1330</strain>
    </source>
</reference>
<sequence length="310" mass="33943">MSEDAVKNAILIAGPTASGKSALAIRMAKATGGFIVNTDSMQVYGVLDLLTARPSRADLAEAEHFLYGHVPPSSTYSTGKWFEDVEALLGRCGLQGRVPIFVGGTGLYFRALLGGLSQMPEVSAQVRDHWRGRMEAEGAKALHAVLCVRDPAIAAALQPSDSQRIVRALEVLESTGKSLLEWQKVKGRALVDDQSAQKIVLRPDRAWLGERIARRFSAMWAEGAIDEVRALLALDLDPALPAMKAIGVREVSAFLAETMSREEAIERSVIATRQYAKRQSTWFRNQLGEDWRVYASGEEVFQGGSFRDPQ</sequence>